<dbReference type="EMBL" id="KF663696">
    <property type="protein sequence ID" value="AHL20247.1"/>
    <property type="molecule type" value="mRNA"/>
</dbReference>
<dbReference type="SMR" id="W8NXX6"/>
<dbReference type="VEuPathDB" id="VectorBase:AALC636_033783"/>
<dbReference type="VEuPathDB" id="VectorBase:AALF000221"/>
<dbReference type="VEuPathDB" id="VectorBase:AALFPA_042885"/>
<dbReference type="Proteomes" id="UP000069940">
    <property type="component" value="Unplaced"/>
</dbReference>
<dbReference type="GO" id="GO:0005886">
    <property type="term" value="C:plasma membrane"/>
    <property type="evidence" value="ECO:0007669"/>
    <property type="project" value="UniProtKB-SubCell"/>
</dbReference>
<dbReference type="GO" id="GO:0005549">
    <property type="term" value="F:odorant binding"/>
    <property type="evidence" value="ECO:0007669"/>
    <property type="project" value="InterPro"/>
</dbReference>
<dbReference type="GO" id="GO:0004984">
    <property type="term" value="F:olfactory receptor activity"/>
    <property type="evidence" value="ECO:0007669"/>
    <property type="project" value="InterPro"/>
</dbReference>
<dbReference type="GO" id="GO:0007165">
    <property type="term" value="P:signal transduction"/>
    <property type="evidence" value="ECO:0007669"/>
    <property type="project" value="UniProtKB-KW"/>
</dbReference>
<dbReference type="InterPro" id="IPR004117">
    <property type="entry name" value="7tm6_olfct_rcpt"/>
</dbReference>
<dbReference type="PANTHER" id="PTHR21137">
    <property type="entry name" value="ODORANT RECEPTOR"/>
    <property type="match status" value="1"/>
</dbReference>
<dbReference type="PANTHER" id="PTHR21137:SF9">
    <property type="entry name" value="ODORANT RECEPTOR CORECEPTOR"/>
    <property type="match status" value="1"/>
</dbReference>
<dbReference type="Pfam" id="PF02949">
    <property type="entry name" value="7tm_6"/>
    <property type="match status" value="1"/>
</dbReference>
<comment type="function">
    <text evidence="1 4">Odorant coreceptor which complexes with conventional odorant receptors (ORs) to form odorant-sensing units, providing sensitive and prolonged odorant signaling and calcium permeability (PubMed:27350348). Orco is a universal and integral part of the functional odorant receptor, involved in the dendritic localization of other olfactory receptors (By similarity). Required for detecting a host for blood feeding (PubMed:27350348). Plays a key role in preferred attraction of females for humans over non-human hosts for blood feeding (PubMed:27350348).</text>
</comment>
<comment type="subunit">
    <text evidence="1">Heterodimer with conventional odorant receptors (ORs).</text>
</comment>
<comment type="subcellular location">
    <subcellularLocation>
        <location evidence="4">Cell membrane</location>
        <topology evidence="2">Multi-pass membrane protein</topology>
    </subcellularLocation>
</comment>
<comment type="tissue specificity">
    <text evidence="4">Expressed in female antenna, maxillary palp and proboscis (PubMed:27350348). Not detected in male tissues (PubMed:27350348).</text>
</comment>
<comment type="developmental stage">
    <text evidence="4">Expressed in pupal and larval stages.</text>
</comment>
<comment type="disruption phenotype">
    <text evidence="4">RNAi-mediated knockdown results in significantly lower blood feeding rate in female mosquitoes (PubMed:27350348). Lack of sensitivity to all tested odors in antennae of female mosquitoes (PubMed:27350348). Lower preference for humans as hosts for blood feeding (PubMed:27350348).</text>
</comment>
<comment type="similarity">
    <text evidence="6">Belongs to the insect chemoreceptor superfamily. Heteromeric odorant receptor channel (TC 1.A.69) family. Orco subfamily.</text>
</comment>
<keyword id="KW-0085">Behavior</keyword>
<keyword id="KW-1003">Cell membrane</keyword>
<keyword id="KW-0325">Glycoprotein</keyword>
<keyword id="KW-0472">Membrane</keyword>
<keyword id="KW-0552">Olfaction</keyword>
<keyword id="KW-0675">Receptor</keyword>
<keyword id="KW-0716">Sensory transduction</keyword>
<keyword id="KW-0807">Transducer</keyword>
<keyword id="KW-0812">Transmembrane</keyword>
<keyword id="KW-1133">Transmembrane helix</keyword>
<organism evidence="7">
    <name type="scientific">Aedes albopictus</name>
    <name type="common">Asian tiger mosquito</name>
    <name type="synonym">Stegomyia albopicta</name>
    <dbReference type="NCBI Taxonomy" id="7160"/>
    <lineage>
        <taxon>Eukaryota</taxon>
        <taxon>Metazoa</taxon>
        <taxon>Ecdysozoa</taxon>
        <taxon>Arthropoda</taxon>
        <taxon>Hexapoda</taxon>
        <taxon>Insecta</taxon>
        <taxon>Pterygota</taxon>
        <taxon>Neoptera</taxon>
        <taxon>Endopterygota</taxon>
        <taxon>Diptera</taxon>
        <taxon>Nematocera</taxon>
        <taxon>Culicoidea</taxon>
        <taxon>Culicidae</taxon>
        <taxon>Culicinae</taxon>
        <taxon>Aedini</taxon>
        <taxon>Aedes</taxon>
        <taxon>Stegomyia</taxon>
    </lineage>
</organism>
<gene>
    <name evidence="7" type="primary">Orco</name>
</gene>
<protein>
    <recommendedName>
        <fullName evidence="6">Odorant receptor coreceptor</fullName>
        <shortName evidence="5">AalOR7</shortName>
        <shortName evidence="5">AalOrco</shortName>
    </recommendedName>
</protein>
<name>ORCO_AEDAL</name>
<proteinExistence type="evidence at transcript level"/>
<reference evidence="7" key="1">
    <citation type="submission" date="2013-09" db="EMBL/GenBank/DDBJ databases">
        <authorList>
            <person name="Zhang X.R."/>
            <person name="Luo D.M."/>
            <person name="Pan J."/>
        </authorList>
    </citation>
    <scope>NUCLEOTIDE SEQUENCE [MRNA]</scope>
    <source>
        <strain evidence="7">Aalb130501ZXR</strain>
    </source>
</reference>
<reference evidence="6" key="2">
    <citation type="journal article" date="2016" name="Parasit. Vectors">
        <title>Functional analysis of Orco and odorant receptors in odor recognition in Aedes albopictus.</title>
        <authorList>
            <person name="Liu H."/>
            <person name="Liu T."/>
            <person name="Xie L."/>
            <person name="Wang X."/>
            <person name="Deng Y."/>
            <person name="Chen C.H."/>
            <person name="James A.A."/>
            <person name="Chen X.G."/>
        </authorList>
    </citation>
    <scope>FUNCTION</scope>
    <scope>SUBCELLULAR LOCATION</scope>
    <scope>TISSUE SPECIFICITY</scope>
    <scope>DEVELOPMENTAL STAGE</scope>
    <scope>DISRUPTION PHENOTYPE</scope>
</reference>
<feature type="chain" id="PRO_0000460273" description="Odorant receptor coreceptor">
    <location>
        <begin position="1"/>
        <end position="479"/>
    </location>
</feature>
<feature type="topological domain" description="Cytoplasmic" evidence="6">
    <location>
        <begin position="1"/>
        <end position="43"/>
    </location>
</feature>
<feature type="transmembrane region" description="Helical" evidence="2">
    <location>
        <begin position="44"/>
        <end position="64"/>
    </location>
</feature>
<feature type="topological domain" description="Extracellular" evidence="6">
    <location>
        <begin position="65"/>
        <end position="73"/>
    </location>
</feature>
<feature type="transmembrane region" description="Helical" evidence="2">
    <location>
        <begin position="74"/>
        <end position="94"/>
    </location>
</feature>
<feature type="topological domain" description="Cytoplasmic" evidence="6">
    <location>
        <begin position="95"/>
        <end position="133"/>
    </location>
</feature>
<feature type="transmembrane region" description="Helical" evidence="2">
    <location>
        <begin position="134"/>
        <end position="154"/>
    </location>
</feature>
<feature type="topological domain" description="Extracellular" evidence="6">
    <location>
        <begin position="155"/>
        <end position="187"/>
    </location>
</feature>
<feature type="transmembrane region" description="Helical" evidence="2">
    <location>
        <begin position="188"/>
        <end position="208"/>
    </location>
</feature>
<feature type="topological domain" description="Cytoplasmic" evidence="6">
    <location>
        <begin position="209"/>
        <end position="344"/>
    </location>
</feature>
<feature type="transmembrane region" description="Helical" evidence="2">
    <location>
        <begin position="345"/>
        <end position="365"/>
    </location>
</feature>
<feature type="topological domain" description="Extracellular" evidence="6">
    <location>
        <begin position="366"/>
        <end position="383"/>
    </location>
</feature>
<feature type="transmembrane region" description="Helical" evidence="2">
    <location>
        <begin position="384"/>
        <end position="404"/>
    </location>
</feature>
<feature type="topological domain" description="Cytoplasmic" evidence="6">
    <location>
        <begin position="405"/>
        <end position="455"/>
    </location>
</feature>
<feature type="transmembrane region" description="Helical" evidence="2">
    <location>
        <begin position="456"/>
        <end position="476"/>
    </location>
</feature>
<feature type="topological domain" description="Extracellular" evidence="6">
    <location>
        <begin position="477"/>
        <end position="479"/>
    </location>
</feature>
<feature type="glycosylation site" description="N-linked (GlcNAc...) asparagine" evidence="3">
    <location>
        <position position="167"/>
    </location>
</feature>
<sequence length="479" mass="54317">MHVQPTKYHGLVLDLMPNIRLMQGFGHFLFRYVSGPVLIRKLYSWWNLIMILLQYFAIMGNLVMNTGDVNELTANTITTLFFTHSVTKFIYVAVNSEHFYRTLGIWNQPNSHSLFAESDARYHSIALAKMRKLLVMVMVTTVLSVVAWITITFFGDSVKNVFDKETNETYTVEIPRLPIKALYPWDAMSGVPYFFSFVYQAYFLLFSMCQANLADVMFCSWLLFTCEQLQHLKGIMRPLMELSASLDTYRPNSAALFRAASAGSKAELILNEEKDPDTKDFDLNGIYNSKADWGAQFRAPSTLQTFNDNNGMNGNPNGLTKKQELMVRSAIKYWVERHKHVVRLVSAIGETYGAALLLHMLTSTIKLTLLAYQATKIDALNVYGLTVIGYLVYALAQVFLFCIFGNRLIEESSSVMEAAYSCHWYDGSEEAKTFVQIVCQQCQKAMTISGAKFFTVSLDLFASVLGAVVTYFMVLVQLK</sequence>
<accession>W8NXX6</accession>
<evidence type="ECO:0000250" key="1">
    <source>
        <dbReference type="UniProtKB" id="Q9VNB5"/>
    </source>
</evidence>
<evidence type="ECO:0000255" key="2"/>
<evidence type="ECO:0000255" key="3">
    <source>
        <dbReference type="PROSITE-ProRule" id="PRU00498"/>
    </source>
</evidence>
<evidence type="ECO:0000269" key="4">
    <source>
    </source>
</evidence>
<evidence type="ECO:0000303" key="5">
    <source>
    </source>
</evidence>
<evidence type="ECO:0000305" key="6"/>
<evidence type="ECO:0000312" key="7">
    <source>
        <dbReference type="EMBL" id="AHL20247.1"/>
    </source>
</evidence>